<reference key="1">
    <citation type="submission" date="2003-07" db="EMBL/GenBank/DDBJ databases">
        <authorList>
            <consortium name="NIH - Zebrafish Gene Collection (ZGC) project"/>
        </authorList>
    </citation>
    <scope>NUCLEOTIDE SEQUENCE [LARGE SCALE MRNA]</scope>
    <source>
        <strain>AB</strain>
    </source>
</reference>
<reference key="2">
    <citation type="journal article" date="2008" name="J. Proteome Res.">
        <title>Online automated in vivo zebrafish phosphoproteomics: from large-scale analysis down to a single embryo.</title>
        <authorList>
            <person name="Lemeer S."/>
            <person name="Pinkse M.W.H."/>
            <person name="Mohammed S."/>
            <person name="van Breukelen B."/>
            <person name="den Hertog J."/>
            <person name="Slijper M."/>
            <person name="Heck A.J.R."/>
        </authorList>
    </citation>
    <scope>PHOSPHORYLATION [LARGE SCALE ANALYSIS]</scope>
    <scope>IDENTIFICATION BY MASS SPECTROMETRY</scope>
    <source>
        <tissue>Embryo</tissue>
    </source>
</reference>
<comment type="function">
    <text evidence="1">Component of the eukaryotic translation initiation factor 3 (eIF-3) complex, which is involved in protein synthesis of a specialized repertoire of mRNAs and, together with other initiation factors, stimulates binding of mRNA and methionyl-tRNAi to the 40S ribosome. The eIF-3 complex specifically targets and initiates translation of a subset of mRNAs involved in cell proliferation.</text>
</comment>
<comment type="subunit">
    <text evidence="1">Component of the eukaryotic translation initiation factor 3 (eIF-3) complex, which is composed of 13 subunits: eif3a, eif3b, eif3c, eif3d, eif3e, eif3f, eif3g, eif3h, eif3i, eif3j, eif3k, eif3l and eif3m.</text>
</comment>
<comment type="subcellular location">
    <subcellularLocation>
        <location evidence="1">Cytoplasm</location>
    </subcellularLocation>
</comment>
<comment type="similarity">
    <text evidence="1">Belongs to the eIF-3 subunit J family.</text>
</comment>
<accession>Q7SXU0</accession>
<protein>
    <recommendedName>
        <fullName evidence="1">Eukaryotic translation initiation factor 3 subunit J-A</fullName>
        <shortName evidence="1">eIF3j-A</shortName>
    </recommendedName>
    <alternativeName>
        <fullName evidence="1">Eukaryotic translation initiation factor 3 subunit 1-A</fullName>
    </alternativeName>
    <alternativeName>
        <fullName evidence="1">eIF-3-alpha-A</fullName>
    </alternativeName>
    <alternativeName>
        <fullName evidence="1">eIF3 p35-A</fullName>
    </alternativeName>
</protein>
<gene>
    <name type="primary">eif3ja</name>
    <name type="synonym">eif3j</name>
    <name type="synonym">eif3s1a</name>
    <name type="ORF">zgc:63801</name>
</gene>
<feature type="chain" id="PRO_0000365124" description="Eukaryotic translation initiation factor 3 subunit J-A">
    <location>
        <begin position="1"/>
        <end position="249"/>
    </location>
</feature>
<feature type="region of interest" description="Disordered" evidence="2">
    <location>
        <begin position="1"/>
        <end position="104"/>
    </location>
</feature>
<feature type="coiled-coil region" evidence="1">
    <location>
        <begin position="34"/>
        <end position="96"/>
    </location>
</feature>
<feature type="compositionally biased region" description="Acidic residues" evidence="2">
    <location>
        <begin position="1"/>
        <end position="15"/>
    </location>
</feature>
<feature type="compositionally biased region" description="Basic and acidic residues" evidence="2">
    <location>
        <begin position="16"/>
        <end position="27"/>
    </location>
</feature>
<feature type="compositionally biased region" description="Acidic residues" evidence="2">
    <location>
        <begin position="28"/>
        <end position="52"/>
    </location>
</feature>
<feature type="compositionally biased region" description="Basic and acidic residues" evidence="2">
    <location>
        <begin position="53"/>
        <end position="96"/>
    </location>
</feature>
<evidence type="ECO:0000255" key="1">
    <source>
        <dbReference type="HAMAP-Rule" id="MF_03009"/>
    </source>
</evidence>
<evidence type="ECO:0000256" key="2">
    <source>
        <dbReference type="SAM" id="MobiDB-lite"/>
    </source>
</evidence>
<proteinExistence type="evidence at protein level"/>
<organism>
    <name type="scientific">Danio rerio</name>
    <name type="common">Zebrafish</name>
    <name type="synonym">Brachydanio rerio</name>
    <dbReference type="NCBI Taxonomy" id="7955"/>
    <lineage>
        <taxon>Eukaryota</taxon>
        <taxon>Metazoa</taxon>
        <taxon>Chordata</taxon>
        <taxon>Craniata</taxon>
        <taxon>Vertebrata</taxon>
        <taxon>Euteleostomi</taxon>
        <taxon>Actinopterygii</taxon>
        <taxon>Neopterygii</taxon>
        <taxon>Teleostei</taxon>
        <taxon>Ostariophysi</taxon>
        <taxon>Cypriniformes</taxon>
        <taxon>Danionidae</taxon>
        <taxon>Danioninae</taxon>
        <taxon>Danio</taxon>
    </lineage>
</organism>
<name>EI3JA_DANRE</name>
<sequence length="249" mass="28673">MADADSWDADSFEPEEPIKKAAVHDKWEGEDEDDDVKDNWDDDEEEEKEEEEEKKTEAKPTEKKKLSEKIKEKENLQRKKQEELRKQQLEETKRDTPLTPEDELAEKLRVKQLQEDSDLELAKEAFGVVSNNVTGIDAVSPSSKDDFTEFERLLKEKISPYEKSIHYSGFLETLFRDLCLSLEVEDLKKINNSLTVLLSEKQRQEKANKGKKKKKGVLPGGGLKAKMKDDLADYGGFDGGYAQDYEDFM</sequence>
<keyword id="KW-0175">Coiled coil</keyword>
<keyword id="KW-0963">Cytoplasm</keyword>
<keyword id="KW-0396">Initiation factor</keyword>
<keyword id="KW-0597">Phosphoprotein</keyword>
<keyword id="KW-0648">Protein biosynthesis</keyword>
<keyword id="KW-1185">Reference proteome</keyword>
<dbReference type="EMBL" id="BC055247">
    <property type="protein sequence ID" value="AAH55247.1"/>
    <property type="molecule type" value="mRNA"/>
</dbReference>
<dbReference type="RefSeq" id="NP_957508.1">
    <property type="nucleotide sequence ID" value="NM_201214.1"/>
</dbReference>
<dbReference type="SMR" id="Q7SXU0"/>
<dbReference type="FunCoup" id="Q7SXU0">
    <property type="interactions" value="2166"/>
</dbReference>
<dbReference type="STRING" id="7955.ENSDARP00000124801"/>
<dbReference type="PaxDb" id="7955-ENSDARP00000124801"/>
<dbReference type="GeneID" id="394189"/>
<dbReference type="KEGG" id="dre:394189"/>
<dbReference type="AGR" id="ZFIN:ZDB-GENE-040426-1266"/>
<dbReference type="CTD" id="394189"/>
<dbReference type="ZFIN" id="ZDB-GENE-040426-1266">
    <property type="gene designation" value="eif3ja"/>
</dbReference>
<dbReference type="eggNOG" id="KOG4813">
    <property type="taxonomic scope" value="Eukaryota"/>
</dbReference>
<dbReference type="InParanoid" id="Q7SXU0"/>
<dbReference type="OrthoDB" id="20381at2759"/>
<dbReference type="PhylomeDB" id="Q7SXU0"/>
<dbReference type="Reactome" id="R-DRE-156827">
    <property type="pathway name" value="L13a-mediated translational silencing of Ceruloplasmin expression"/>
</dbReference>
<dbReference type="Reactome" id="R-DRE-72689">
    <property type="pathway name" value="Formation of a pool of free 40S subunits"/>
</dbReference>
<dbReference type="Reactome" id="R-DRE-72695">
    <property type="pathway name" value="Formation of the ternary complex, and subsequently, the 43S complex"/>
</dbReference>
<dbReference type="Reactome" id="R-DRE-72702">
    <property type="pathway name" value="Ribosomal scanning and start codon recognition"/>
</dbReference>
<dbReference type="PRO" id="PR:Q7SXU0"/>
<dbReference type="Proteomes" id="UP000000437">
    <property type="component" value="Chromosome 25"/>
</dbReference>
<dbReference type="GO" id="GO:0016282">
    <property type="term" value="C:eukaryotic 43S preinitiation complex"/>
    <property type="evidence" value="ECO:0007669"/>
    <property type="project" value="UniProtKB-UniRule"/>
</dbReference>
<dbReference type="GO" id="GO:0033290">
    <property type="term" value="C:eukaryotic 48S preinitiation complex"/>
    <property type="evidence" value="ECO:0007669"/>
    <property type="project" value="UniProtKB-UniRule"/>
</dbReference>
<dbReference type="GO" id="GO:0005852">
    <property type="term" value="C:eukaryotic translation initiation factor 3 complex"/>
    <property type="evidence" value="ECO:0000250"/>
    <property type="project" value="UniProtKB"/>
</dbReference>
<dbReference type="GO" id="GO:0003743">
    <property type="term" value="F:translation initiation factor activity"/>
    <property type="evidence" value="ECO:0007669"/>
    <property type="project" value="UniProtKB-UniRule"/>
</dbReference>
<dbReference type="GO" id="GO:0001732">
    <property type="term" value="P:formation of cytoplasmic translation initiation complex"/>
    <property type="evidence" value="ECO:0007669"/>
    <property type="project" value="UniProtKB-UniRule"/>
</dbReference>
<dbReference type="FunFam" id="1.10.246.60:FF:000001">
    <property type="entry name" value="Eukaryotic translation initiation factor 3 subunit J"/>
    <property type="match status" value="1"/>
</dbReference>
<dbReference type="Gene3D" id="1.10.246.60">
    <property type="entry name" value="Eukaryotic translation initiation factor 3 like domains"/>
    <property type="match status" value="1"/>
</dbReference>
<dbReference type="HAMAP" id="MF_03009">
    <property type="entry name" value="eIF3j"/>
    <property type="match status" value="1"/>
</dbReference>
<dbReference type="InterPro" id="IPR023194">
    <property type="entry name" value="eIF3-like_dom_sf"/>
</dbReference>
<dbReference type="InterPro" id="IPR013906">
    <property type="entry name" value="eIF3j"/>
</dbReference>
<dbReference type="PANTHER" id="PTHR21681">
    <property type="entry name" value="EUKARYOTIC TRANSLATION INITIATION FACTOR 3 SUBUNIT J"/>
    <property type="match status" value="1"/>
</dbReference>
<dbReference type="PANTHER" id="PTHR21681:SF0">
    <property type="entry name" value="EUKARYOTIC TRANSLATION INITIATION FACTOR 3 SUBUNIT J"/>
    <property type="match status" value="1"/>
</dbReference>
<dbReference type="Pfam" id="PF08597">
    <property type="entry name" value="eIF3_subunit"/>
    <property type="match status" value="1"/>
</dbReference>